<protein>
    <recommendedName>
        <fullName evidence="1">Large ribosomal subunit protein bL36A</fullName>
    </recommendedName>
    <alternativeName>
        <fullName evidence="2">50S ribosomal protein L36 1</fullName>
    </alternativeName>
</protein>
<dbReference type="EMBL" id="AL157959">
    <property type="protein sequence ID" value="CAM07425.1"/>
    <property type="molecule type" value="Genomic_DNA"/>
</dbReference>
<dbReference type="PIR" id="A82003">
    <property type="entry name" value="A82003"/>
</dbReference>
<dbReference type="RefSeq" id="WP_002216248.1">
    <property type="nucleotide sequence ID" value="NC_003116.1"/>
</dbReference>
<dbReference type="SMR" id="P66292"/>
<dbReference type="EnsemblBacteria" id="CAM07425">
    <property type="protein sequence ID" value="CAM07425"/>
    <property type="gene ID" value="NMA0107"/>
</dbReference>
<dbReference type="GeneID" id="93387239"/>
<dbReference type="KEGG" id="nma:NMA0107"/>
<dbReference type="HOGENOM" id="CLU_135723_6_2_4"/>
<dbReference type="Proteomes" id="UP000000626">
    <property type="component" value="Chromosome"/>
</dbReference>
<dbReference type="GO" id="GO:0005737">
    <property type="term" value="C:cytoplasm"/>
    <property type="evidence" value="ECO:0007669"/>
    <property type="project" value="UniProtKB-ARBA"/>
</dbReference>
<dbReference type="GO" id="GO:1990904">
    <property type="term" value="C:ribonucleoprotein complex"/>
    <property type="evidence" value="ECO:0007669"/>
    <property type="project" value="UniProtKB-KW"/>
</dbReference>
<dbReference type="GO" id="GO:0005840">
    <property type="term" value="C:ribosome"/>
    <property type="evidence" value="ECO:0007669"/>
    <property type="project" value="UniProtKB-KW"/>
</dbReference>
<dbReference type="GO" id="GO:0003735">
    <property type="term" value="F:structural constituent of ribosome"/>
    <property type="evidence" value="ECO:0007669"/>
    <property type="project" value="InterPro"/>
</dbReference>
<dbReference type="GO" id="GO:0006412">
    <property type="term" value="P:translation"/>
    <property type="evidence" value="ECO:0007669"/>
    <property type="project" value="UniProtKB-UniRule"/>
</dbReference>
<dbReference type="HAMAP" id="MF_00251">
    <property type="entry name" value="Ribosomal_bL36"/>
    <property type="match status" value="1"/>
</dbReference>
<dbReference type="InterPro" id="IPR000473">
    <property type="entry name" value="Ribosomal_bL36"/>
</dbReference>
<dbReference type="InterPro" id="IPR035977">
    <property type="entry name" value="Ribosomal_bL36_sp"/>
</dbReference>
<dbReference type="NCBIfam" id="TIGR01022">
    <property type="entry name" value="rpmJ_bact"/>
    <property type="match status" value="1"/>
</dbReference>
<dbReference type="PANTHER" id="PTHR42888">
    <property type="entry name" value="50S RIBOSOMAL PROTEIN L36, CHLOROPLASTIC"/>
    <property type="match status" value="1"/>
</dbReference>
<dbReference type="PANTHER" id="PTHR42888:SF1">
    <property type="entry name" value="LARGE RIBOSOMAL SUBUNIT PROTEIN BL36C"/>
    <property type="match status" value="1"/>
</dbReference>
<dbReference type="Pfam" id="PF00444">
    <property type="entry name" value="Ribosomal_L36"/>
    <property type="match status" value="1"/>
</dbReference>
<dbReference type="SUPFAM" id="SSF57840">
    <property type="entry name" value="Ribosomal protein L36"/>
    <property type="match status" value="1"/>
</dbReference>
<dbReference type="PROSITE" id="PS00828">
    <property type="entry name" value="RIBOSOMAL_L36"/>
    <property type="match status" value="1"/>
</dbReference>
<accession>P66292</accession>
<accession>A1INW8</accession>
<accession>Q9JRB2</accession>
<reference key="1">
    <citation type="journal article" date="2000" name="Nature">
        <title>Complete DNA sequence of a serogroup A strain of Neisseria meningitidis Z2491.</title>
        <authorList>
            <person name="Parkhill J."/>
            <person name="Achtman M."/>
            <person name="James K.D."/>
            <person name="Bentley S.D."/>
            <person name="Churcher C.M."/>
            <person name="Klee S.R."/>
            <person name="Morelli G."/>
            <person name="Basham D."/>
            <person name="Brown D."/>
            <person name="Chillingworth T."/>
            <person name="Davies R.M."/>
            <person name="Davis P."/>
            <person name="Devlin K."/>
            <person name="Feltwell T."/>
            <person name="Hamlin N."/>
            <person name="Holroyd S."/>
            <person name="Jagels K."/>
            <person name="Leather S."/>
            <person name="Moule S."/>
            <person name="Mungall K.L."/>
            <person name="Quail M.A."/>
            <person name="Rajandream M.A."/>
            <person name="Rutherford K.M."/>
            <person name="Simmonds M."/>
            <person name="Skelton J."/>
            <person name="Whitehead S."/>
            <person name="Spratt B.G."/>
            <person name="Barrell B.G."/>
        </authorList>
    </citation>
    <scope>NUCLEOTIDE SEQUENCE [LARGE SCALE GENOMIC DNA]</scope>
    <source>
        <strain>DSM 15465 / Z2491</strain>
    </source>
</reference>
<comment type="similarity">
    <text evidence="1">Belongs to the bacterial ribosomal protein bL36 family.</text>
</comment>
<keyword id="KW-0687">Ribonucleoprotein</keyword>
<keyword id="KW-0689">Ribosomal protein</keyword>
<gene>
    <name evidence="1" type="primary">rpmJ1</name>
    <name type="synonym">rpmJ</name>
    <name type="ordered locus">NMA0107</name>
</gene>
<organism>
    <name type="scientific">Neisseria meningitidis serogroup A / serotype 4A (strain DSM 15465 / Z2491)</name>
    <dbReference type="NCBI Taxonomy" id="122587"/>
    <lineage>
        <taxon>Bacteria</taxon>
        <taxon>Pseudomonadati</taxon>
        <taxon>Pseudomonadota</taxon>
        <taxon>Betaproteobacteria</taxon>
        <taxon>Neisseriales</taxon>
        <taxon>Neisseriaceae</taxon>
        <taxon>Neisseria</taxon>
    </lineage>
</organism>
<feature type="chain" id="PRO_0000126223" description="Large ribosomal subunit protein bL36A">
    <location>
        <begin position="1"/>
        <end position="37"/>
    </location>
</feature>
<name>RL361_NEIMA</name>
<proteinExistence type="inferred from homology"/>
<evidence type="ECO:0000255" key="1">
    <source>
        <dbReference type="HAMAP-Rule" id="MF_00251"/>
    </source>
</evidence>
<evidence type="ECO:0000305" key="2"/>
<sequence length="37" mass="4489">MRVQPSVKKICRNCKIIRRNRVVRVICTDLRHKQRQG</sequence>